<gene>
    <name evidence="1" type="primary">pheS</name>
    <name type="ordered locus">Aave_2855</name>
</gene>
<dbReference type="EC" id="6.1.1.20" evidence="1"/>
<dbReference type="EMBL" id="CP000512">
    <property type="protein sequence ID" value="ABM33423.1"/>
    <property type="molecule type" value="Genomic_DNA"/>
</dbReference>
<dbReference type="RefSeq" id="WP_011795944.1">
    <property type="nucleotide sequence ID" value="NC_008752.1"/>
</dbReference>
<dbReference type="SMR" id="A1TR35"/>
<dbReference type="STRING" id="397945.Aave_2855"/>
<dbReference type="GeneID" id="79792543"/>
<dbReference type="KEGG" id="aav:Aave_2855"/>
<dbReference type="eggNOG" id="COG0016">
    <property type="taxonomic scope" value="Bacteria"/>
</dbReference>
<dbReference type="HOGENOM" id="CLU_025086_0_1_4"/>
<dbReference type="OrthoDB" id="9800719at2"/>
<dbReference type="Proteomes" id="UP000002596">
    <property type="component" value="Chromosome"/>
</dbReference>
<dbReference type="GO" id="GO:0005737">
    <property type="term" value="C:cytoplasm"/>
    <property type="evidence" value="ECO:0007669"/>
    <property type="project" value="UniProtKB-SubCell"/>
</dbReference>
<dbReference type="GO" id="GO:0005524">
    <property type="term" value="F:ATP binding"/>
    <property type="evidence" value="ECO:0007669"/>
    <property type="project" value="UniProtKB-UniRule"/>
</dbReference>
<dbReference type="GO" id="GO:0000287">
    <property type="term" value="F:magnesium ion binding"/>
    <property type="evidence" value="ECO:0007669"/>
    <property type="project" value="UniProtKB-UniRule"/>
</dbReference>
<dbReference type="GO" id="GO:0004826">
    <property type="term" value="F:phenylalanine-tRNA ligase activity"/>
    <property type="evidence" value="ECO:0007669"/>
    <property type="project" value="UniProtKB-UniRule"/>
</dbReference>
<dbReference type="GO" id="GO:0000049">
    <property type="term" value="F:tRNA binding"/>
    <property type="evidence" value="ECO:0007669"/>
    <property type="project" value="InterPro"/>
</dbReference>
<dbReference type="GO" id="GO:0006432">
    <property type="term" value="P:phenylalanyl-tRNA aminoacylation"/>
    <property type="evidence" value="ECO:0007669"/>
    <property type="project" value="UniProtKB-UniRule"/>
</dbReference>
<dbReference type="CDD" id="cd00496">
    <property type="entry name" value="PheRS_alpha_core"/>
    <property type="match status" value="1"/>
</dbReference>
<dbReference type="Gene3D" id="3.30.930.10">
    <property type="entry name" value="Bira Bifunctional Protein, Domain 2"/>
    <property type="match status" value="1"/>
</dbReference>
<dbReference type="HAMAP" id="MF_00281">
    <property type="entry name" value="Phe_tRNA_synth_alpha1"/>
    <property type="match status" value="1"/>
</dbReference>
<dbReference type="InterPro" id="IPR006195">
    <property type="entry name" value="aa-tRNA-synth_II"/>
</dbReference>
<dbReference type="InterPro" id="IPR045864">
    <property type="entry name" value="aa-tRNA-synth_II/BPL/LPL"/>
</dbReference>
<dbReference type="InterPro" id="IPR004529">
    <property type="entry name" value="Phe-tRNA-synth_IIc_asu"/>
</dbReference>
<dbReference type="InterPro" id="IPR004188">
    <property type="entry name" value="Phe-tRNA_ligase_II_N"/>
</dbReference>
<dbReference type="InterPro" id="IPR022911">
    <property type="entry name" value="Phe_tRNA_ligase_alpha1_bac"/>
</dbReference>
<dbReference type="InterPro" id="IPR002319">
    <property type="entry name" value="Phenylalanyl-tRNA_Synthase"/>
</dbReference>
<dbReference type="InterPro" id="IPR010978">
    <property type="entry name" value="tRNA-bd_arm"/>
</dbReference>
<dbReference type="NCBIfam" id="TIGR00468">
    <property type="entry name" value="pheS"/>
    <property type="match status" value="1"/>
</dbReference>
<dbReference type="PANTHER" id="PTHR11538:SF41">
    <property type="entry name" value="PHENYLALANINE--TRNA LIGASE, MITOCHONDRIAL"/>
    <property type="match status" value="1"/>
</dbReference>
<dbReference type="PANTHER" id="PTHR11538">
    <property type="entry name" value="PHENYLALANYL-TRNA SYNTHETASE"/>
    <property type="match status" value="1"/>
</dbReference>
<dbReference type="Pfam" id="PF02912">
    <property type="entry name" value="Phe_tRNA-synt_N"/>
    <property type="match status" value="1"/>
</dbReference>
<dbReference type="Pfam" id="PF01409">
    <property type="entry name" value="tRNA-synt_2d"/>
    <property type="match status" value="1"/>
</dbReference>
<dbReference type="SUPFAM" id="SSF55681">
    <property type="entry name" value="Class II aaRS and biotin synthetases"/>
    <property type="match status" value="1"/>
</dbReference>
<dbReference type="SUPFAM" id="SSF46589">
    <property type="entry name" value="tRNA-binding arm"/>
    <property type="match status" value="1"/>
</dbReference>
<dbReference type="PROSITE" id="PS50862">
    <property type="entry name" value="AA_TRNA_LIGASE_II"/>
    <property type="match status" value="1"/>
</dbReference>
<protein>
    <recommendedName>
        <fullName evidence="1">Phenylalanine--tRNA ligase alpha subunit</fullName>
        <ecNumber evidence="1">6.1.1.20</ecNumber>
    </recommendedName>
    <alternativeName>
        <fullName evidence="1">Phenylalanyl-tRNA synthetase alpha subunit</fullName>
        <shortName evidence="1">PheRS</shortName>
    </alternativeName>
</protein>
<comment type="catalytic activity">
    <reaction evidence="1">
        <text>tRNA(Phe) + L-phenylalanine + ATP = L-phenylalanyl-tRNA(Phe) + AMP + diphosphate + H(+)</text>
        <dbReference type="Rhea" id="RHEA:19413"/>
        <dbReference type="Rhea" id="RHEA-COMP:9668"/>
        <dbReference type="Rhea" id="RHEA-COMP:9699"/>
        <dbReference type="ChEBI" id="CHEBI:15378"/>
        <dbReference type="ChEBI" id="CHEBI:30616"/>
        <dbReference type="ChEBI" id="CHEBI:33019"/>
        <dbReference type="ChEBI" id="CHEBI:58095"/>
        <dbReference type="ChEBI" id="CHEBI:78442"/>
        <dbReference type="ChEBI" id="CHEBI:78531"/>
        <dbReference type="ChEBI" id="CHEBI:456215"/>
        <dbReference type="EC" id="6.1.1.20"/>
    </reaction>
</comment>
<comment type="cofactor">
    <cofactor evidence="1">
        <name>Mg(2+)</name>
        <dbReference type="ChEBI" id="CHEBI:18420"/>
    </cofactor>
    <text evidence="1">Binds 2 magnesium ions per tetramer.</text>
</comment>
<comment type="subunit">
    <text evidence="1">Tetramer of two alpha and two beta subunits.</text>
</comment>
<comment type="subcellular location">
    <subcellularLocation>
        <location evidence="1">Cytoplasm</location>
    </subcellularLocation>
</comment>
<comment type="similarity">
    <text evidence="1">Belongs to the class-II aminoacyl-tRNA synthetase family. Phe-tRNA synthetase alpha subunit type 1 subfamily.</text>
</comment>
<keyword id="KW-0030">Aminoacyl-tRNA synthetase</keyword>
<keyword id="KW-0067">ATP-binding</keyword>
<keyword id="KW-0963">Cytoplasm</keyword>
<keyword id="KW-0436">Ligase</keyword>
<keyword id="KW-0460">Magnesium</keyword>
<keyword id="KW-0479">Metal-binding</keyword>
<keyword id="KW-0547">Nucleotide-binding</keyword>
<keyword id="KW-0648">Protein biosynthesis</keyword>
<sequence>MNELDSLVDAARRMFADAATPTDLENAKAQFLGKAGRVTELLKGLAQLPVEEKKSRGAAVNVAKQAIEQALNERRQALADAELQAQLQAEALDVTLPGRQRGQGGLHPVSLTLERIEGIFGSMGFDVADGPEIESDWFNFTALNTPEDHPARSMHDTFYVEGGTASAPLLLRTHTSPMQIRHAVQHVKKHRALLDAGQPMPEIRVIAPGRTYRVDSDATHSPMFHQCEGLWIGENVSFKDLKVVFTAFCRTFFESDDLVLRFRPSFFPFTEPSAEIDIQFQDGPLAGRWLEVAGSGQVHPNVVRNMGLDPEKYIGFAFGMGPDRLTMLRYGVNDLRLFFDGDIRFLSQFQ</sequence>
<name>SYFA_PARC0</name>
<organism>
    <name type="scientific">Paracidovorax citrulli (strain AAC00-1)</name>
    <name type="common">Acidovorax citrulli</name>
    <dbReference type="NCBI Taxonomy" id="397945"/>
    <lineage>
        <taxon>Bacteria</taxon>
        <taxon>Pseudomonadati</taxon>
        <taxon>Pseudomonadota</taxon>
        <taxon>Betaproteobacteria</taxon>
        <taxon>Burkholderiales</taxon>
        <taxon>Comamonadaceae</taxon>
        <taxon>Paracidovorax</taxon>
    </lineage>
</organism>
<reference key="1">
    <citation type="submission" date="2006-12" db="EMBL/GenBank/DDBJ databases">
        <title>Complete sequence of Acidovorax avenae subsp. citrulli AAC00-1.</title>
        <authorList>
            <person name="Copeland A."/>
            <person name="Lucas S."/>
            <person name="Lapidus A."/>
            <person name="Barry K."/>
            <person name="Detter J.C."/>
            <person name="Glavina del Rio T."/>
            <person name="Dalin E."/>
            <person name="Tice H."/>
            <person name="Pitluck S."/>
            <person name="Kiss H."/>
            <person name="Brettin T."/>
            <person name="Bruce D."/>
            <person name="Han C."/>
            <person name="Tapia R."/>
            <person name="Gilna P."/>
            <person name="Schmutz J."/>
            <person name="Larimer F."/>
            <person name="Land M."/>
            <person name="Hauser L."/>
            <person name="Kyrpides N."/>
            <person name="Kim E."/>
            <person name="Stahl D."/>
            <person name="Richardson P."/>
        </authorList>
    </citation>
    <scope>NUCLEOTIDE SEQUENCE [LARGE SCALE GENOMIC DNA]</scope>
    <source>
        <strain>AAC00-1</strain>
    </source>
</reference>
<feature type="chain" id="PRO_1000059231" description="Phenylalanine--tRNA ligase alpha subunit">
    <location>
        <begin position="1"/>
        <end position="350"/>
    </location>
</feature>
<feature type="binding site" evidence="1">
    <location>
        <position position="271"/>
    </location>
    <ligand>
        <name>Mg(2+)</name>
        <dbReference type="ChEBI" id="CHEBI:18420"/>
        <note>shared with beta subunit</note>
    </ligand>
</feature>
<accession>A1TR35</accession>
<proteinExistence type="inferred from homology"/>
<evidence type="ECO:0000255" key="1">
    <source>
        <dbReference type="HAMAP-Rule" id="MF_00281"/>
    </source>
</evidence>